<sequence>MSGLPIATNLYFDAHFHRRGVKLLPNEFYTTREDMVLVTVLGSCVAACLHDPIARIGGMNHFMLPDDGADPSAAASESMRYGAYAMEVLINELIKAGGRRERFEAKVFGGAAVLAGMTTINIGDRNADFVRRYLALERIRITAEDLQGVHPRKVAFMPHTGQAMVKKLRVQAPDVAEREAALAREAAGPRGERAARARPRVELFGTPAPKAQATPRIELFGTRATQPATRKQEA</sequence>
<name>CHED1_BURTA</name>
<protein>
    <recommendedName>
        <fullName evidence="1">Probable chemoreceptor glutamine deamidase CheD 1</fullName>
        <ecNumber evidence="1">3.5.1.44</ecNumber>
    </recommendedName>
</protein>
<reference key="1">
    <citation type="journal article" date="2005" name="BMC Genomics">
        <title>Bacterial genome adaptation to niches: divergence of the potential virulence genes in three Burkholderia species of different survival strategies.</title>
        <authorList>
            <person name="Kim H.S."/>
            <person name="Schell M.A."/>
            <person name="Yu Y."/>
            <person name="Ulrich R.L."/>
            <person name="Sarria S.H."/>
            <person name="Nierman W.C."/>
            <person name="DeShazer D."/>
        </authorList>
    </citation>
    <scope>NUCLEOTIDE SEQUENCE [LARGE SCALE GENOMIC DNA]</scope>
    <source>
        <strain>ATCC 700388 / DSM 13276 / CCUG 48851 / CIP 106301 / E264</strain>
    </source>
</reference>
<dbReference type="EC" id="3.5.1.44" evidence="1"/>
<dbReference type="EMBL" id="CP000086">
    <property type="protein sequence ID" value="ABC39548.1"/>
    <property type="molecule type" value="Genomic_DNA"/>
</dbReference>
<dbReference type="SMR" id="Q2STS7"/>
<dbReference type="GeneID" id="45122860"/>
<dbReference type="KEGG" id="bte:BTH_I3178"/>
<dbReference type="HOGENOM" id="CLU_087854_0_0_4"/>
<dbReference type="Proteomes" id="UP000001930">
    <property type="component" value="Chromosome I"/>
</dbReference>
<dbReference type="GO" id="GO:0050568">
    <property type="term" value="F:protein-glutamine glutaminase activity"/>
    <property type="evidence" value="ECO:0007669"/>
    <property type="project" value="UniProtKB-UniRule"/>
</dbReference>
<dbReference type="GO" id="GO:0006935">
    <property type="term" value="P:chemotaxis"/>
    <property type="evidence" value="ECO:0007669"/>
    <property type="project" value="UniProtKB-UniRule"/>
</dbReference>
<dbReference type="CDD" id="cd16352">
    <property type="entry name" value="CheD"/>
    <property type="match status" value="1"/>
</dbReference>
<dbReference type="Gene3D" id="3.30.1330.200">
    <property type="match status" value="1"/>
</dbReference>
<dbReference type="HAMAP" id="MF_01440">
    <property type="entry name" value="CheD"/>
    <property type="match status" value="1"/>
</dbReference>
<dbReference type="InterPro" id="IPR038592">
    <property type="entry name" value="CheD-like_sf"/>
</dbReference>
<dbReference type="InterPro" id="IPR005659">
    <property type="entry name" value="Chemorcpt_Glu_NH3ase_CheD"/>
</dbReference>
<dbReference type="InterPro" id="IPR011324">
    <property type="entry name" value="Cytotoxic_necrot_fac-like_cat"/>
</dbReference>
<dbReference type="NCBIfam" id="NF010013">
    <property type="entry name" value="PRK13487.1"/>
    <property type="match status" value="1"/>
</dbReference>
<dbReference type="NCBIfam" id="NF010014">
    <property type="entry name" value="PRK13489.1"/>
    <property type="match status" value="1"/>
</dbReference>
<dbReference type="PANTHER" id="PTHR35147">
    <property type="entry name" value="CHEMORECEPTOR GLUTAMINE DEAMIDASE CHED-RELATED"/>
    <property type="match status" value="1"/>
</dbReference>
<dbReference type="PANTHER" id="PTHR35147:SF2">
    <property type="entry name" value="CHEMORECEPTOR GLUTAMINE DEAMIDASE CHED-RELATED"/>
    <property type="match status" value="1"/>
</dbReference>
<dbReference type="Pfam" id="PF03975">
    <property type="entry name" value="CheD"/>
    <property type="match status" value="1"/>
</dbReference>
<dbReference type="SUPFAM" id="SSF64438">
    <property type="entry name" value="CNF1/YfiH-like putative cysteine hydrolases"/>
    <property type="match status" value="1"/>
</dbReference>
<feature type="chain" id="PRO_0000251017" description="Probable chemoreceptor glutamine deamidase CheD 1">
    <location>
        <begin position="1"/>
        <end position="234"/>
    </location>
</feature>
<feature type="region of interest" description="Disordered" evidence="2">
    <location>
        <begin position="183"/>
        <end position="234"/>
    </location>
</feature>
<feature type="compositionally biased region" description="Basic and acidic residues" evidence="2">
    <location>
        <begin position="190"/>
        <end position="201"/>
    </location>
</feature>
<feature type="compositionally biased region" description="Polar residues" evidence="2">
    <location>
        <begin position="223"/>
        <end position="234"/>
    </location>
</feature>
<comment type="function">
    <text evidence="1">Probably deamidates glutamine residues to glutamate on methyl-accepting chemotaxis receptors (MCPs), playing an important role in chemotaxis.</text>
</comment>
<comment type="catalytic activity">
    <reaction evidence="1">
        <text>L-glutaminyl-[protein] + H2O = L-glutamyl-[protein] + NH4(+)</text>
        <dbReference type="Rhea" id="RHEA:16441"/>
        <dbReference type="Rhea" id="RHEA-COMP:10207"/>
        <dbReference type="Rhea" id="RHEA-COMP:10208"/>
        <dbReference type="ChEBI" id="CHEBI:15377"/>
        <dbReference type="ChEBI" id="CHEBI:28938"/>
        <dbReference type="ChEBI" id="CHEBI:29973"/>
        <dbReference type="ChEBI" id="CHEBI:30011"/>
        <dbReference type="EC" id="3.5.1.44"/>
    </reaction>
</comment>
<comment type="similarity">
    <text evidence="1">Belongs to the CheD family.</text>
</comment>
<accession>Q2STS7</accession>
<keyword id="KW-0145">Chemotaxis</keyword>
<keyword id="KW-0378">Hydrolase</keyword>
<organism>
    <name type="scientific">Burkholderia thailandensis (strain ATCC 700388 / DSM 13276 / CCUG 48851 / CIP 106301 / E264)</name>
    <dbReference type="NCBI Taxonomy" id="271848"/>
    <lineage>
        <taxon>Bacteria</taxon>
        <taxon>Pseudomonadati</taxon>
        <taxon>Pseudomonadota</taxon>
        <taxon>Betaproteobacteria</taxon>
        <taxon>Burkholderiales</taxon>
        <taxon>Burkholderiaceae</taxon>
        <taxon>Burkholderia</taxon>
        <taxon>pseudomallei group</taxon>
    </lineage>
</organism>
<evidence type="ECO:0000255" key="1">
    <source>
        <dbReference type="HAMAP-Rule" id="MF_01440"/>
    </source>
</evidence>
<evidence type="ECO:0000256" key="2">
    <source>
        <dbReference type="SAM" id="MobiDB-lite"/>
    </source>
</evidence>
<proteinExistence type="inferred from homology"/>
<gene>
    <name evidence="1" type="primary">cheD1</name>
    <name type="ordered locus">BTH_I3178</name>
</gene>